<evidence type="ECO:0000255" key="1">
    <source>
        <dbReference type="HAMAP-Rule" id="MF_00131"/>
    </source>
</evidence>
<reference key="1">
    <citation type="journal article" date="2004" name="Environ. Microbiol.">
        <title>The genome of Desulfotalea psychrophila, a sulfate-reducing bacterium from permanently cold Arctic sediments.</title>
        <authorList>
            <person name="Rabus R."/>
            <person name="Ruepp A."/>
            <person name="Frickey T."/>
            <person name="Rattei T."/>
            <person name="Fartmann B."/>
            <person name="Stark M."/>
            <person name="Bauer M."/>
            <person name="Zibat A."/>
            <person name="Lombardot T."/>
            <person name="Becker I."/>
            <person name="Amann J."/>
            <person name="Gellner K."/>
            <person name="Teeling H."/>
            <person name="Leuschner W.D."/>
            <person name="Gloeckner F.-O."/>
            <person name="Lupas A.N."/>
            <person name="Amann R."/>
            <person name="Klenk H.-P."/>
        </authorList>
    </citation>
    <scope>NUCLEOTIDE SEQUENCE [LARGE SCALE GENOMIC DNA]</scope>
    <source>
        <strain>DSM 12343 / LSv54</strain>
    </source>
</reference>
<feature type="chain" id="PRO_0000098776" description="Tryptophan synthase alpha chain">
    <location>
        <begin position="1"/>
        <end position="254"/>
    </location>
</feature>
<feature type="active site" description="Proton acceptor" evidence="1">
    <location>
        <position position="48"/>
    </location>
</feature>
<feature type="active site" description="Proton acceptor" evidence="1">
    <location>
        <position position="59"/>
    </location>
</feature>
<sequence>MTLEKILREKKKDKDILLMTHIVLGYPSFAANREVIEQMVKNGVDCIEMQIPFSEPMADGPVILKANQESLARGTRVAQCFDFAREMTRKHQIPFLFMTYYNIVFKYGEERFFQDAKEAGIKGLIVPDLPPEMGEDYFAYAEQYQLAPIIIYAPTSTPERMKTLAGSATGFIYCAARRGVTGNNSALDENFDNYLSNCRAATTLPLAVGFGIKSKADVQALIGKADMAVIGSQTIRLVDENGPKAVGPFVASLR</sequence>
<organism>
    <name type="scientific">Desulfotalea psychrophila (strain LSv54 / DSM 12343)</name>
    <dbReference type="NCBI Taxonomy" id="177439"/>
    <lineage>
        <taxon>Bacteria</taxon>
        <taxon>Pseudomonadati</taxon>
        <taxon>Thermodesulfobacteriota</taxon>
        <taxon>Desulfobulbia</taxon>
        <taxon>Desulfobulbales</taxon>
        <taxon>Desulfocapsaceae</taxon>
        <taxon>Desulfotalea</taxon>
    </lineage>
</organism>
<gene>
    <name evidence="1" type="primary">trpA</name>
    <name type="ordered locus">DP1630</name>
</gene>
<comment type="function">
    <text evidence="1">The alpha subunit is responsible for the aldol cleavage of indoleglycerol phosphate to indole and glyceraldehyde 3-phosphate.</text>
</comment>
<comment type="catalytic activity">
    <reaction evidence="1">
        <text>(1S,2R)-1-C-(indol-3-yl)glycerol 3-phosphate + L-serine = D-glyceraldehyde 3-phosphate + L-tryptophan + H2O</text>
        <dbReference type="Rhea" id="RHEA:10532"/>
        <dbReference type="ChEBI" id="CHEBI:15377"/>
        <dbReference type="ChEBI" id="CHEBI:33384"/>
        <dbReference type="ChEBI" id="CHEBI:57912"/>
        <dbReference type="ChEBI" id="CHEBI:58866"/>
        <dbReference type="ChEBI" id="CHEBI:59776"/>
        <dbReference type="EC" id="4.2.1.20"/>
    </reaction>
</comment>
<comment type="pathway">
    <text evidence="1">Amino-acid biosynthesis; L-tryptophan biosynthesis; L-tryptophan from chorismate: step 5/5.</text>
</comment>
<comment type="subunit">
    <text evidence="1">Tetramer of two alpha and two beta chains.</text>
</comment>
<comment type="similarity">
    <text evidence="1">Belongs to the TrpA family.</text>
</comment>
<name>TRPA_DESPS</name>
<accession>Q6AMR6</accession>
<keyword id="KW-0028">Amino-acid biosynthesis</keyword>
<keyword id="KW-0057">Aromatic amino acid biosynthesis</keyword>
<keyword id="KW-0456">Lyase</keyword>
<keyword id="KW-1185">Reference proteome</keyword>
<keyword id="KW-0822">Tryptophan biosynthesis</keyword>
<dbReference type="EC" id="4.2.1.20" evidence="1"/>
<dbReference type="EMBL" id="CR522870">
    <property type="protein sequence ID" value="CAG36359.1"/>
    <property type="molecule type" value="Genomic_DNA"/>
</dbReference>
<dbReference type="RefSeq" id="WP_011188871.1">
    <property type="nucleotide sequence ID" value="NC_006138.1"/>
</dbReference>
<dbReference type="SMR" id="Q6AMR6"/>
<dbReference type="STRING" id="177439.DP1630"/>
<dbReference type="KEGG" id="dps:DP1630"/>
<dbReference type="eggNOG" id="COG0159">
    <property type="taxonomic scope" value="Bacteria"/>
</dbReference>
<dbReference type="HOGENOM" id="CLU_016734_0_4_7"/>
<dbReference type="OrthoDB" id="9804578at2"/>
<dbReference type="UniPathway" id="UPA00035">
    <property type="reaction ID" value="UER00044"/>
</dbReference>
<dbReference type="Proteomes" id="UP000000602">
    <property type="component" value="Chromosome"/>
</dbReference>
<dbReference type="GO" id="GO:0005829">
    <property type="term" value="C:cytosol"/>
    <property type="evidence" value="ECO:0007669"/>
    <property type="project" value="TreeGrafter"/>
</dbReference>
<dbReference type="GO" id="GO:0004834">
    <property type="term" value="F:tryptophan synthase activity"/>
    <property type="evidence" value="ECO:0007669"/>
    <property type="project" value="UniProtKB-UniRule"/>
</dbReference>
<dbReference type="CDD" id="cd04724">
    <property type="entry name" value="Tryptophan_synthase_alpha"/>
    <property type="match status" value="1"/>
</dbReference>
<dbReference type="FunFam" id="3.20.20.70:FF:000037">
    <property type="entry name" value="Tryptophan synthase alpha chain"/>
    <property type="match status" value="1"/>
</dbReference>
<dbReference type="Gene3D" id="3.20.20.70">
    <property type="entry name" value="Aldolase class I"/>
    <property type="match status" value="1"/>
</dbReference>
<dbReference type="HAMAP" id="MF_00131">
    <property type="entry name" value="Trp_synth_alpha"/>
    <property type="match status" value="1"/>
</dbReference>
<dbReference type="InterPro" id="IPR013785">
    <property type="entry name" value="Aldolase_TIM"/>
</dbReference>
<dbReference type="InterPro" id="IPR011060">
    <property type="entry name" value="RibuloseP-bd_barrel"/>
</dbReference>
<dbReference type="InterPro" id="IPR018204">
    <property type="entry name" value="Trp_synthase_alpha_AS"/>
</dbReference>
<dbReference type="InterPro" id="IPR002028">
    <property type="entry name" value="Trp_synthase_suA"/>
</dbReference>
<dbReference type="NCBIfam" id="TIGR00262">
    <property type="entry name" value="trpA"/>
    <property type="match status" value="1"/>
</dbReference>
<dbReference type="PANTHER" id="PTHR43406:SF1">
    <property type="entry name" value="TRYPTOPHAN SYNTHASE ALPHA CHAIN, CHLOROPLASTIC"/>
    <property type="match status" value="1"/>
</dbReference>
<dbReference type="PANTHER" id="PTHR43406">
    <property type="entry name" value="TRYPTOPHAN SYNTHASE, ALPHA CHAIN"/>
    <property type="match status" value="1"/>
</dbReference>
<dbReference type="Pfam" id="PF00290">
    <property type="entry name" value="Trp_syntA"/>
    <property type="match status" value="1"/>
</dbReference>
<dbReference type="SUPFAM" id="SSF51366">
    <property type="entry name" value="Ribulose-phoshate binding barrel"/>
    <property type="match status" value="1"/>
</dbReference>
<dbReference type="PROSITE" id="PS00167">
    <property type="entry name" value="TRP_SYNTHASE_ALPHA"/>
    <property type="match status" value="1"/>
</dbReference>
<proteinExistence type="inferred from homology"/>
<protein>
    <recommendedName>
        <fullName evidence="1">Tryptophan synthase alpha chain</fullName>
        <ecNumber evidence="1">4.2.1.20</ecNumber>
    </recommendedName>
</protein>